<keyword id="KW-0963">Cytoplasm</keyword>
<keyword id="KW-0238">DNA-binding</keyword>
<keyword id="KW-1185">Reference proteome</keyword>
<keyword id="KW-0678">Repressor</keyword>
<keyword id="KW-0804">Transcription</keyword>
<keyword id="KW-0805">Transcription regulation</keyword>
<gene>
    <name type="primary">rcnR</name>
    <name type="ordered locus">Z3273</name>
    <name type="ordered locus">ECs2911</name>
</gene>
<reference key="1">
    <citation type="journal article" date="2001" name="Nature">
        <title>Genome sequence of enterohaemorrhagic Escherichia coli O157:H7.</title>
        <authorList>
            <person name="Perna N.T."/>
            <person name="Plunkett G. III"/>
            <person name="Burland V."/>
            <person name="Mau B."/>
            <person name="Glasner J.D."/>
            <person name="Rose D.J."/>
            <person name="Mayhew G.F."/>
            <person name="Evans P.S."/>
            <person name="Gregor J."/>
            <person name="Kirkpatrick H.A."/>
            <person name="Posfai G."/>
            <person name="Hackett J."/>
            <person name="Klink S."/>
            <person name="Boutin A."/>
            <person name="Shao Y."/>
            <person name="Miller L."/>
            <person name="Grotbeck E.J."/>
            <person name="Davis N.W."/>
            <person name="Lim A."/>
            <person name="Dimalanta E.T."/>
            <person name="Potamousis K."/>
            <person name="Apodaca J."/>
            <person name="Anantharaman T.S."/>
            <person name="Lin J."/>
            <person name="Yen G."/>
            <person name="Schwartz D.C."/>
            <person name="Welch R.A."/>
            <person name="Blattner F.R."/>
        </authorList>
    </citation>
    <scope>NUCLEOTIDE SEQUENCE [LARGE SCALE GENOMIC DNA]</scope>
    <source>
        <strain>O157:H7 / EDL933 / ATCC 700927 / EHEC</strain>
    </source>
</reference>
<reference key="2">
    <citation type="journal article" date="2001" name="DNA Res.">
        <title>Complete genome sequence of enterohemorrhagic Escherichia coli O157:H7 and genomic comparison with a laboratory strain K-12.</title>
        <authorList>
            <person name="Hayashi T."/>
            <person name="Makino K."/>
            <person name="Ohnishi M."/>
            <person name="Kurokawa K."/>
            <person name="Ishii K."/>
            <person name="Yokoyama K."/>
            <person name="Han C.-G."/>
            <person name="Ohtsubo E."/>
            <person name="Nakayama K."/>
            <person name="Murata T."/>
            <person name="Tanaka M."/>
            <person name="Tobe T."/>
            <person name="Iida T."/>
            <person name="Takami H."/>
            <person name="Honda T."/>
            <person name="Sasakawa C."/>
            <person name="Ogasawara N."/>
            <person name="Yasunaga T."/>
            <person name="Kuhara S."/>
            <person name="Shiba T."/>
            <person name="Hattori M."/>
            <person name="Shinagawa H."/>
        </authorList>
    </citation>
    <scope>NUCLEOTIDE SEQUENCE [LARGE SCALE GENOMIC DNA]</scope>
    <source>
        <strain>O157:H7 / Sakai / RIMD 0509952 / EHEC</strain>
    </source>
</reference>
<protein>
    <recommendedName>
        <fullName>Transcriptional repressor RcnR</fullName>
    </recommendedName>
</protein>
<accession>P64532</accession>
<accession>P76424</accession>
<name>RCNR_ECO57</name>
<sequence>MSHTIRDKQKLKARASKIQGQVVALKKMLDEPHECAAVLQQIAAIRGAVNGLMREVIKGHLTEHIVHQGDELKREEDLDVVLKVLDSYIK</sequence>
<evidence type="ECO:0000250" key="1"/>
<evidence type="ECO:0000305" key="2"/>
<organism>
    <name type="scientific">Escherichia coli O157:H7</name>
    <dbReference type="NCBI Taxonomy" id="83334"/>
    <lineage>
        <taxon>Bacteria</taxon>
        <taxon>Pseudomonadati</taxon>
        <taxon>Pseudomonadota</taxon>
        <taxon>Gammaproteobacteria</taxon>
        <taxon>Enterobacterales</taxon>
        <taxon>Enterobacteriaceae</taxon>
        <taxon>Escherichia</taxon>
    </lineage>
</organism>
<dbReference type="EMBL" id="AE005174">
    <property type="protein sequence ID" value="AAG57166.1"/>
    <property type="molecule type" value="Genomic_DNA"/>
</dbReference>
<dbReference type="EMBL" id="BA000007">
    <property type="protein sequence ID" value="BAB36334.1"/>
    <property type="molecule type" value="Genomic_DNA"/>
</dbReference>
<dbReference type="PIR" id="B85838">
    <property type="entry name" value="B85838"/>
</dbReference>
<dbReference type="PIR" id="G90992">
    <property type="entry name" value="G90992"/>
</dbReference>
<dbReference type="RefSeq" id="NP_310938.1">
    <property type="nucleotide sequence ID" value="NC_002695.1"/>
</dbReference>
<dbReference type="RefSeq" id="WP_000019944.1">
    <property type="nucleotide sequence ID" value="NZ_VOAI01000013.1"/>
</dbReference>
<dbReference type="SMR" id="P64532"/>
<dbReference type="STRING" id="155864.Z3273"/>
<dbReference type="GeneID" id="916614"/>
<dbReference type="GeneID" id="93775089"/>
<dbReference type="KEGG" id="ece:Z3273"/>
<dbReference type="KEGG" id="ecs:ECs_2911"/>
<dbReference type="PATRIC" id="fig|386585.9.peg.3042"/>
<dbReference type="eggNOG" id="COG1937">
    <property type="taxonomic scope" value="Bacteria"/>
</dbReference>
<dbReference type="HOGENOM" id="CLU_130332_3_0_6"/>
<dbReference type="OMA" id="EHLTECI"/>
<dbReference type="Proteomes" id="UP000000558">
    <property type="component" value="Chromosome"/>
</dbReference>
<dbReference type="Proteomes" id="UP000002519">
    <property type="component" value="Chromosome"/>
</dbReference>
<dbReference type="GO" id="GO:0005737">
    <property type="term" value="C:cytoplasm"/>
    <property type="evidence" value="ECO:0007669"/>
    <property type="project" value="UniProtKB-SubCell"/>
</dbReference>
<dbReference type="GO" id="GO:0003677">
    <property type="term" value="F:DNA binding"/>
    <property type="evidence" value="ECO:0007669"/>
    <property type="project" value="UniProtKB-KW"/>
</dbReference>
<dbReference type="GO" id="GO:0046872">
    <property type="term" value="F:metal ion binding"/>
    <property type="evidence" value="ECO:0007669"/>
    <property type="project" value="InterPro"/>
</dbReference>
<dbReference type="GO" id="GO:0045892">
    <property type="term" value="P:negative regulation of DNA-templated transcription"/>
    <property type="evidence" value="ECO:0007669"/>
    <property type="project" value="UniProtKB-ARBA"/>
</dbReference>
<dbReference type="CDD" id="cd10153">
    <property type="entry name" value="RcnR-FrmR-like_DUF156"/>
    <property type="match status" value="1"/>
</dbReference>
<dbReference type="FunFam" id="1.20.58.1000:FF:000001">
    <property type="entry name" value="Transcriptional repressor RcnR"/>
    <property type="match status" value="1"/>
</dbReference>
<dbReference type="Gene3D" id="1.20.58.1000">
    <property type="entry name" value="Metal-sensitive repressor, helix protomer"/>
    <property type="match status" value="1"/>
</dbReference>
<dbReference type="InterPro" id="IPR003735">
    <property type="entry name" value="Metal_Tscrpt_repr"/>
</dbReference>
<dbReference type="InterPro" id="IPR038390">
    <property type="entry name" value="Metal_Tscrpt_repr_sf"/>
</dbReference>
<dbReference type="NCBIfam" id="NF011613">
    <property type="entry name" value="PRK15039.1"/>
    <property type="match status" value="1"/>
</dbReference>
<dbReference type="PANTHER" id="PTHR33677">
    <property type="entry name" value="TRANSCRIPTIONAL REPRESSOR FRMR-RELATED"/>
    <property type="match status" value="1"/>
</dbReference>
<dbReference type="PANTHER" id="PTHR33677:SF1">
    <property type="entry name" value="TRANSCRIPTIONAL REPRESSOR RCNR"/>
    <property type="match status" value="1"/>
</dbReference>
<dbReference type="Pfam" id="PF02583">
    <property type="entry name" value="Trns_repr_metal"/>
    <property type="match status" value="1"/>
</dbReference>
<proteinExistence type="inferred from homology"/>
<feature type="chain" id="PRO_0000169144" description="Transcriptional repressor RcnR">
    <location>
        <begin position="1"/>
        <end position="90"/>
    </location>
</feature>
<comment type="function">
    <text evidence="1">Repressor of rcnA expression. Acts by binding specifically to the rcnA promoter in the absence of nickel and cobalt. In the presence of one of these metals, it has a weaker affinity for rcnA promoter (By similarity).</text>
</comment>
<comment type="subcellular location">
    <subcellularLocation>
        <location evidence="2">Cytoplasm</location>
    </subcellularLocation>
</comment>
<comment type="similarity">
    <text evidence="2">Belongs to the FrmR/RcnR family.</text>
</comment>